<dbReference type="EC" id="1.10.3.2"/>
<dbReference type="EMBL" id="AF506030">
    <property type="protein sequence ID" value="AAM77221.1"/>
    <property type="molecule type" value="mRNA"/>
</dbReference>
<dbReference type="EMBL" id="AC007020">
    <property type="protein sequence ID" value="AAD25671.1"/>
    <property type="molecule type" value="Genomic_DNA"/>
</dbReference>
<dbReference type="EMBL" id="CP002685">
    <property type="protein sequence ID" value="AEC09819.1"/>
    <property type="molecule type" value="Genomic_DNA"/>
</dbReference>
<dbReference type="PIR" id="F84828">
    <property type="entry name" value="F84828"/>
</dbReference>
<dbReference type="RefSeq" id="NP_181568.1">
    <property type="nucleotide sequence ID" value="NM_129597.4"/>
</dbReference>
<dbReference type="SMR" id="Q9SIY8"/>
<dbReference type="STRING" id="3702.Q9SIY8"/>
<dbReference type="GlyCosmos" id="Q9SIY8">
    <property type="glycosylation" value="8 sites, No reported glycans"/>
</dbReference>
<dbReference type="GlyGen" id="Q9SIY8">
    <property type="glycosylation" value="8 sites"/>
</dbReference>
<dbReference type="PaxDb" id="3702-AT2G40370.1"/>
<dbReference type="ProteomicsDB" id="237054"/>
<dbReference type="EnsemblPlants" id="AT2G40370.1">
    <property type="protein sequence ID" value="AT2G40370.1"/>
    <property type="gene ID" value="AT2G40370"/>
</dbReference>
<dbReference type="GeneID" id="818630"/>
<dbReference type="Gramene" id="AT2G40370.1">
    <property type="protein sequence ID" value="AT2G40370.1"/>
    <property type="gene ID" value="AT2G40370"/>
</dbReference>
<dbReference type="KEGG" id="ath:AT2G40370"/>
<dbReference type="Araport" id="AT2G40370"/>
<dbReference type="TAIR" id="AT2G40370">
    <property type="gene designation" value="LAC5"/>
</dbReference>
<dbReference type="eggNOG" id="KOG1263">
    <property type="taxonomic scope" value="Eukaryota"/>
</dbReference>
<dbReference type="HOGENOM" id="CLU_006504_6_3_1"/>
<dbReference type="InParanoid" id="Q9SIY8"/>
<dbReference type="OMA" id="WTINGTS"/>
<dbReference type="PhylomeDB" id="Q9SIY8"/>
<dbReference type="BioCyc" id="ARA:AT2G40370-MONOMER"/>
<dbReference type="PRO" id="PR:Q9SIY8"/>
<dbReference type="Proteomes" id="UP000006548">
    <property type="component" value="Chromosome 2"/>
</dbReference>
<dbReference type="ExpressionAtlas" id="Q9SIY8">
    <property type="expression patterns" value="baseline and differential"/>
</dbReference>
<dbReference type="GO" id="GO:0048046">
    <property type="term" value="C:apoplast"/>
    <property type="evidence" value="ECO:0007669"/>
    <property type="project" value="UniProtKB-SubCell"/>
</dbReference>
<dbReference type="GO" id="GO:0048226">
    <property type="term" value="C:Casparian strip"/>
    <property type="evidence" value="ECO:0000314"/>
    <property type="project" value="TAIR"/>
</dbReference>
<dbReference type="GO" id="GO:0005507">
    <property type="term" value="F:copper ion binding"/>
    <property type="evidence" value="ECO:0007669"/>
    <property type="project" value="InterPro"/>
</dbReference>
<dbReference type="GO" id="GO:0052716">
    <property type="term" value="F:hydroquinone:oxygen oxidoreductase activity"/>
    <property type="evidence" value="ECO:0007669"/>
    <property type="project" value="UniProtKB-EC"/>
</dbReference>
<dbReference type="GO" id="GO:0046274">
    <property type="term" value="P:lignin catabolic process"/>
    <property type="evidence" value="ECO:0007669"/>
    <property type="project" value="UniProtKB-KW"/>
</dbReference>
<dbReference type="GO" id="GO:0046688">
    <property type="term" value="P:response to copper ion"/>
    <property type="evidence" value="ECO:0000270"/>
    <property type="project" value="TAIR"/>
</dbReference>
<dbReference type="CDD" id="cd13849">
    <property type="entry name" value="CuRO_1_LCC_plant"/>
    <property type="match status" value="1"/>
</dbReference>
<dbReference type="CDD" id="cd13875">
    <property type="entry name" value="CuRO_2_LCC_plant"/>
    <property type="match status" value="1"/>
</dbReference>
<dbReference type="CDD" id="cd13897">
    <property type="entry name" value="CuRO_3_LCC_plant"/>
    <property type="match status" value="1"/>
</dbReference>
<dbReference type="FunFam" id="2.60.40.420:FF:000049">
    <property type="entry name" value="Laccase"/>
    <property type="match status" value="1"/>
</dbReference>
<dbReference type="FunFam" id="2.60.40.420:FF:000062">
    <property type="entry name" value="Laccase"/>
    <property type="match status" value="1"/>
</dbReference>
<dbReference type="Gene3D" id="2.60.40.420">
    <property type="entry name" value="Cupredoxins - blue copper proteins"/>
    <property type="match status" value="3"/>
</dbReference>
<dbReference type="InterPro" id="IPR011707">
    <property type="entry name" value="Cu-oxidase-like_N"/>
</dbReference>
<dbReference type="InterPro" id="IPR001117">
    <property type="entry name" value="Cu-oxidase_2nd"/>
</dbReference>
<dbReference type="InterPro" id="IPR011706">
    <property type="entry name" value="Cu-oxidase_C"/>
</dbReference>
<dbReference type="InterPro" id="IPR045087">
    <property type="entry name" value="Cu-oxidase_fam"/>
</dbReference>
<dbReference type="InterPro" id="IPR033138">
    <property type="entry name" value="Cu_oxidase_CS"/>
</dbReference>
<dbReference type="InterPro" id="IPR002355">
    <property type="entry name" value="Cu_oxidase_Cu_BS"/>
</dbReference>
<dbReference type="InterPro" id="IPR008972">
    <property type="entry name" value="Cupredoxin"/>
</dbReference>
<dbReference type="InterPro" id="IPR034288">
    <property type="entry name" value="CuRO_1_LCC"/>
</dbReference>
<dbReference type="InterPro" id="IPR034285">
    <property type="entry name" value="CuRO_2_LCC"/>
</dbReference>
<dbReference type="InterPro" id="IPR034289">
    <property type="entry name" value="CuRO_3_LCC"/>
</dbReference>
<dbReference type="InterPro" id="IPR017761">
    <property type="entry name" value="Laccase"/>
</dbReference>
<dbReference type="NCBIfam" id="TIGR03389">
    <property type="entry name" value="laccase"/>
    <property type="match status" value="1"/>
</dbReference>
<dbReference type="PANTHER" id="PTHR11709:SF431">
    <property type="entry name" value="LACCASE-5"/>
    <property type="match status" value="1"/>
</dbReference>
<dbReference type="PANTHER" id="PTHR11709">
    <property type="entry name" value="MULTI-COPPER OXIDASE"/>
    <property type="match status" value="1"/>
</dbReference>
<dbReference type="Pfam" id="PF00394">
    <property type="entry name" value="Cu-oxidase"/>
    <property type="match status" value="1"/>
</dbReference>
<dbReference type="Pfam" id="PF07731">
    <property type="entry name" value="Cu-oxidase_2"/>
    <property type="match status" value="1"/>
</dbReference>
<dbReference type="Pfam" id="PF07732">
    <property type="entry name" value="Cu-oxidase_3"/>
    <property type="match status" value="1"/>
</dbReference>
<dbReference type="SUPFAM" id="SSF49503">
    <property type="entry name" value="Cupredoxins"/>
    <property type="match status" value="3"/>
</dbReference>
<dbReference type="PROSITE" id="PS00079">
    <property type="entry name" value="MULTICOPPER_OXIDASE1"/>
    <property type="match status" value="1"/>
</dbReference>
<dbReference type="PROSITE" id="PS00080">
    <property type="entry name" value="MULTICOPPER_OXIDASE2"/>
    <property type="match status" value="1"/>
</dbReference>
<sequence>MDVTKSLLCFISFVAFLLFSSVAEANKAHHHEFIIQATKVKRLCETHNSITVNGMFPGPMLVVNNGDTLVVKVINRARYNITIHWHGVRQMRTGWADGPEFVTQCPIRPGSSYTYRFTIQGQEGTLWWHAHSSWLRATVYGSLLVFPPAGSSYPFTKPHRNVPLLLGEWWDANPVDVLRESIRTGGAPNNSDAYTINGQPGDLYKCSSQDTTVVPINVGETILLRVINSALNQPLFFTVANHKLTVVGADASYLKPFTTNVIVLGPGQTTDVLITGDQPPNRYYMAARAYQSAQNAPFGNTTTTAILQYKSAPCCGVGGGSGTKKGNSFKPIMPILPAYNDTNTVTRFSQSFRSLRRAEVPTEIDENLFVTIGLGLNNCPKNFRSRRCQGPNGTRFTASMNNVSFALPSNYSLLQAHHHGIPGVFTTDFPAKPPVKFDYTGNNISRSLYQPDRGTKLYKLKYGSRVQIVLQDTGIVTPENHPIHLHGYDFYIIAEGFGNFNPKKDTAKFNLEDPPLRNTVGVPVNGWAVIRFIADNPGVWIMHCHLDAHISWGLAMAFLVENGNGVLQTIEQPPHDLPVC</sequence>
<organism>
    <name type="scientific">Arabidopsis thaliana</name>
    <name type="common">Mouse-ear cress</name>
    <dbReference type="NCBI Taxonomy" id="3702"/>
    <lineage>
        <taxon>Eukaryota</taxon>
        <taxon>Viridiplantae</taxon>
        <taxon>Streptophyta</taxon>
        <taxon>Embryophyta</taxon>
        <taxon>Tracheophyta</taxon>
        <taxon>Spermatophyta</taxon>
        <taxon>Magnoliopsida</taxon>
        <taxon>eudicotyledons</taxon>
        <taxon>Gunneridae</taxon>
        <taxon>Pentapetalae</taxon>
        <taxon>rosids</taxon>
        <taxon>malvids</taxon>
        <taxon>Brassicales</taxon>
        <taxon>Brassicaceae</taxon>
        <taxon>Camelineae</taxon>
        <taxon>Arabidopsis</taxon>
    </lineage>
</organism>
<proteinExistence type="evidence at transcript level"/>
<gene>
    <name type="primary">LAC5</name>
    <name type="synonym">LAC1</name>
    <name type="ordered locus">At2g40370</name>
    <name type="ORF">T3G21.14</name>
</gene>
<keyword id="KW-0052">Apoplast</keyword>
<keyword id="KW-0186">Copper</keyword>
<keyword id="KW-0325">Glycoprotein</keyword>
<keyword id="KW-0439">Lignin degradation</keyword>
<keyword id="KW-0479">Metal-binding</keyword>
<keyword id="KW-0560">Oxidoreductase</keyword>
<keyword id="KW-1185">Reference proteome</keyword>
<keyword id="KW-0677">Repeat</keyword>
<keyword id="KW-0964">Secreted</keyword>
<keyword id="KW-0732">Signal</keyword>
<feature type="signal peptide" evidence="2">
    <location>
        <begin position="1"/>
        <end position="25"/>
    </location>
</feature>
<feature type="chain" id="PRO_0000283633" description="Laccase-5">
    <location>
        <begin position="26"/>
        <end position="580"/>
    </location>
</feature>
<feature type="domain" description="Plastocyanin-like 1">
    <location>
        <begin position="34"/>
        <end position="150"/>
    </location>
</feature>
<feature type="domain" description="Plastocyanin-like 2">
    <location>
        <begin position="160"/>
        <end position="312"/>
    </location>
</feature>
<feature type="domain" description="Plastocyanin-like 3">
    <location>
        <begin position="428"/>
        <end position="564"/>
    </location>
</feature>
<feature type="binding site" description="type 2 copper site" evidence="1">
    <location>
        <position position="84"/>
    </location>
    <ligand>
        <name>Cu cation</name>
        <dbReference type="ChEBI" id="CHEBI:23378"/>
        <label>1</label>
    </ligand>
</feature>
<feature type="binding site" description="type 3 copper site" evidence="1">
    <location>
        <position position="86"/>
    </location>
    <ligand>
        <name>Cu cation</name>
        <dbReference type="ChEBI" id="CHEBI:23378"/>
        <label>2</label>
    </ligand>
</feature>
<feature type="binding site" description="type 3 copper site" evidence="1">
    <location>
        <position position="129"/>
    </location>
    <ligand>
        <name>Cu cation</name>
        <dbReference type="ChEBI" id="CHEBI:23378"/>
        <label>2</label>
    </ligand>
</feature>
<feature type="binding site" description="type 3 copper site" evidence="1">
    <location>
        <position position="131"/>
    </location>
    <ligand>
        <name>Cu cation</name>
        <dbReference type="ChEBI" id="CHEBI:23378"/>
        <label>3</label>
    </ligand>
</feature>
<feature type="binding site" description="type 1 copper site" evidence="1">
    <location>
        <position position="481"/>
    </location>
    <ligand>
        <name>Cu cation</name>
        <dbReference type="ChEBI" id="CHEBI:23378"/>
        <label>4</label>
    </ligand>
</feature>
<feature type="binding site" description="type 2 copper site" evidence="1">
    <location>
        <position position="484"/>
    </location>
    <ligand>
        <name>Cu cation</name>
        <dbReference type="ChEBI" id="CHEBI:23378"/>
        <label>1</label>
    </ligand>
</feature>
<feature type="binding site" description="type 3 copper site" evidence="1">
    <location>
        <position position="486"/>
    </location>
    <ligand>
        <name>Cu cation</name>
        <dbReference type="ChEBI" id="CHEBI:23378"/>
        <label>3</label>
    </ligand>
</feature>
<feature type="binding site" description="type 3 copper site" evidence="1">
    <location>
        <position position="543"/>
    </location>
    <ligand>
        <name>Cu cation</name>
        <dbReference type="ChEBI" id="CHEBI:23378"/>
        <label>3</label>
    </ligand>
</feature>
<feature type="binding site" description="type 1 copper site" evidence="1">
    <location>
        <position position="544"/>
    </location>
    <ligand>
        <name>Cu cation</name>
        <dbReference type="ChEBI" id="CHEBI:23378"/>
        <label>4</label>
    </ligand>
</feature>
<feature type="binding site" description="type 3 copper site" evidence="1">
    <location>
        <position position="545"/>
    </location>
    <ligand>
        <name>Cu cation</name>
        <dbReference type="ChEBI" id="CHEBI:23378"/>
        <label>2</label>
    </ligand>
</feature>
<feature type="binding site" description="type 1 copper site" evidence="1">
    <location>
        <position position="549"/>
    </location>
    <ligand>
        <name>Cu cation</name>
        <dbReference type="ChEBI" id="CHEBI:23378"/>
        <label>4</label>
    </ligand>
</feature>
<feature type="glycosylation site" description="N-linked (GlcNAc...) asparagine" evidence="2">
    <location>
        <position position="80"/>
    </location>
</feature>
<feature type="glycosylation site" description="N-linked (GlcNAc...) asparagine" evidence="2">
    <location>
        <position position="189"/>
    </location>
</feature>
<feature type="glycosylation site" description="N-linked (GlcNAc...) asparagine" evidence="2">
    <location>
        <position position="300"/>
    </location>
</feature>
<feature type="glycosylation site" description="N-linked (GlcNAc...) asparagine" evidence="2">
    <location>
        <position position="340"/>
    </location>
</feature>
<feature type="glycosylation site" description="N-linked (GlcNAc...) asparagine" evidence="2">
    <location>
        <position position="392"/>
    </location>
</feature>
<feature type="glycosylation site" description="N-linked (GlcNAc...) asparagine" evidence="2">
    <location>
        <position position="402"/>
    </location>
</feature>
<feature type="glycosylation site" description="N-linked (GlcNAc...) asparagine" evidence="2">
    <location>
        <position position="410"/>
    </location>
</feature>
<feature type="glycosylation site" description="N-linked (GlcNAc...) asparagine" evidence="2">
    <location>
        <position position="443"/>
    </location>
</feature>
<name>LAC5_ARATH</name>
<protein>
    <recommendedName>
        <fullName>Laccase-5</fullName>
        <ecNumber>1.10.3.2</ecNumber>
    </recommendedName>
    <alternativeName>
        <fullName>Benzenediol:oxygen oxidoreductase 5</fullName>
    </alternativeName>
    <alternativeName>
        <fullName>Diphenol oxidase 5</fullName>
    </alternativeName>
    <alternativeName>
        <fullName>Urishiol oxidase 5</fullName>
    </alternativeName>
</protein>
<accession>Q9SIY8</accession>
<evidence type="ECO:0000250" key="1"/>
<evidence type="ECO:0000255" key="2"/>
<evidence type="ECO:0000269" key="3">
    <source>
    </source>
</evidence>
<evidence type="ECO:0000269" key="4">
    <source>
    </source>
</evidence>
<evidence type="ECO:0000305" key="5"/>
<reference key="1">
    <citation type="submission" date="2002-04" db="EMBL/GenBank/DDBJ databases">
        <title>Molecular cloning, characterization, and expression of a cDNA clone encoding laccase from Arabidopsis thaliana.</title>
        <authorList>
            <person name="Gaynor J.J."/>
        </authorList>
    </citation>
    <scope>NUCLEOTIDE SEQUENCE [MRNA]</scope>
    <source>
        <strain>cv. Columbia</strain>
    </source>
</reference>
<reference key="2">
    <citation type="journal article" date="1999" name="Nature">
        <title>Sequence and analysis of chromosome 2 of the plant Arabidopsis thaliana.</title>
        <authorList>
            <person name="Lin X."/>
            <person name="Kaul S."/>
            <person name="Rounsley S.D."/>
            <person name="Shea T.P."/>
            <person name="Benito M.-I."/>
            <person name="Town C.D."/>
            <person name="Fujii C.Y."/>
            <person name="Mason T.M."/>
            <person name="Bowman C.L."/>
            <person name="Barnstead M.E."/>
            <person name="Feldblyum T.V."/>
            <person name="Buell C.R."/>
            <person name="Ketchum K.A."/>
            <person name="Lee J.J."/>
            <person name="Ronning C.M."/>
            <person name="Koo H.L."/>
            <person name="Moffat K.S."/>
            <person name="Cronin L.A."/>
            <person name="Shen M."/>
            <person name="Pai G."/>
            <person name="Van Aken S."/>
            <person name="Umayam L."/>
            <person name="Tallon L.J."/>
            <person name="Gill J.E."/>
            <person name="Adams M.D."/>
            <person name="Carrera A.J."/>
            <person name="Creasy T.H."/>
            <person name="Goodman H.M."/>
            <person name="Somerville C.R."/>
            <person name="Copenhaver G.P."/>
            <person name="Preuss D."/>
            <person name="Nierman W.C."/>
            <person name="White O."/>
            <person name="Eisen J.A."/>
            <person name="Salzberg S.L."/>
            <person name="Fraser C.M."/>
            <person name="Venter J.C."/>
        </authorList>
    </citation>
    <scope>NUCLEOTIDE SEQUENCE [LARGE SCALE GENOMIC DNA]</scope>
    <source>
        <strain>cv. Columbia</strain>
    </source>
</reference>
<reference key="3">
    <citation type="journal article" date="2017" name="Plant J.">
        <title>Araport11: a complete reannotation of the Arabidopsis thaliana reference genome.</title>
        <authorList>
            <person name="Cheng C.Y."/>
            <person name="Krishnakumar V."/>
            <person name="Chan A.P."/>
            <person name="Thibaud-Nissen F."/>
            <person name="Schobel S."/>
            <person name="Town C.D."/>
        </authorList>
    </citation>
    <scope>GENOME REANNOTATION</scope>
    <source>
        <strain>cv. Columbia</strain>
    </source>
</reference>
<reference key="4">
    <citation type="journal article" date="2005" name="Planta">
        <title>Gene structure and molecular analysis of the laccase-like multicopper oxidase (LMCO) gene family in Arabidopsis thaliana.</title>
        <authorList>
            <person name="McCaig B.C."/>
            <person name="Meagher R.B."/>
            <person name="Dean J.F.D."/>
        </authorList>
    </citation>
    <scope>TISSUE SPECIFICITY</scope>
</reference>
<reference key="5">
    <citation type="journal article" date="2006" name="J. Exp. Bot.">
        <title>Mutant identification and characterization of the laccase gene family in Arabidopsis.</title>
        <authorList>
            <person name="Cai X."/>
            <person name="Davis E.J."/>
            <person name="Ballif J."/>
            <person name="Liang M."/>
            <person name="Bushman E."/>
            <person name="Haroldsen V."/>
            <person name="Torabinejad J."/>
            <person name="Wu Y."/>
        </authorList>
    </citation>
    <scope>TISSUE SPECIFICITY</scope>
</reference>
<comment type="function">
    <text evidence="1">Lignin degradation and detoxification of lignin-derived products.</text>
</comment>
<comment type="catalytic activity">
    <reaction>
        <text>4 hydroquinone + O2 = 4 benzosemiquinone + 2 H2O</text>
        <dbReference type="Rhea" id="RHEA:11276"/>
        <dbReference type="ChEBI" id="CHEBI:15377"/>
        <dbReference type="ChEBI" id="CHEBI:15379"/>
        <dbReference type="ChEBI" id="CHEBI:17594"/>
        <dbReference type="ChEBI" id="CHEBI:17977"/>
        <dbReference type="EC" id="1.10.3.2"/>
    </reaction>
</comment>
<comment type="cofactor">
    <cofactor evidence="1">
        <name>Cu cation</name>
        <dbReference type="ChEBI" id="CHEBI:23378"/>
    </cofactor>
    <text evidence="1">Binds 4 Cu cations per monomer.</text>
</comment>
<comment type="subcellular location">
    <subcellularLocation>
        <location evidence="5">Secreted</location>
        <location evidence="5">Extracellular space</location>
        <location evidence="5">Apoplast</location>
    </subcellularLocation>
</comment>
<comment type="tissue specificity">
    <text evidence="3 4">Ubiquitous and constitutive.</text>
</comment>
<comment type="similarity">
    <text evidence="5">Belongs to the multicopper oxidase family.</text>
</comment>